<comment type="function">
    <text evidence="1">Located at the top of the head of the 30S subunit, it contacts several helices of the 16S rRNA. In the 70S ribosome it contacts the 23S rRNA (bridge B1a) and protein L5 of the 50S subunit (bridge B1b), connecting the 2 subunits; these bridges are implicated in subunit movement. Contacts the tRNAs in the A and P-sites.</text>
</comment>
<comment type="subunit">
    <text evidence="1">Part of the 30S ribosomal subunit. Forms a loose heterodimer with protein S19. Forms two bridges to the 50S subunit in the 70S ribosome.</text>
</comment>
<comment type="similarity">
    <text evidence="1">Belongs to the universal ribosomal protein uS13 family.</text>
</comment>
<proteinExistence type="inferred from homology"/>
<feature type="chain" id="PRO_0000230490" description="Small ribosomal subunit protein uS13">
    <location>
        <begin position="1"/>
        <end position="122"/>
    </location>
</feature>
<feature type="region of interest" description="Disordered" evidence="2">
    <location>
        <begin position="94"/>
        <end position="122"/>
    </location>
</feature>
<feature type="compositionally biased region" description="Basic residues" evidence="2">
    <location>
        <begin position="101"/>
        <end position="122"/>
    </location>
</feature>
<dbReference type="EMBL" id="CP000051">
    <property type="protein sequence ID" value="AAX50784.1"/>
    <property type="molecule type" value="Genomic_DNA"/>
</dbReference>
<dbReference type="RefSeq" id="WP_009871873.1">
    <property type="nucleotide sequence ID" value="NC_007429.1"/>
</dbReference>
<dbReference type="SMR" id="Q3KLI8"/>
<dbReference type="KEGG" id="cta:CTA_0558"/>
<dbReference type="HOGENOM" id="CLU_103849_1_2_0"/>
<dbReference type="Proteomes" id="UP000002532">
    <property type="component" value="Chromosome"/>
</dbReference>
<dbReference type="GO" id="GO:0005829">
    <property type="term" value="C:cytosol"/>
    <property type="evidence" value="ECO:0007669"/>
    <property type="project" value="TreeGrafter"/>
</dbReference>
<dbReference type="GO" id="GO:0015935">
    <property type="term" value="C:small ribosomal subunit"/>
    <property type="evidence" value="ECO:0007669"/>
    <property type="project" value="TreeGrafter"/>
</dbReference>
<dbReference type="GO" id="GO:0019843">
    <property type="term" value="F:rRNA binding"/>
    <property type="evidence" value="ECO:0007669"/>
    <property type="project" value="UniProtKB-UniRule"/>
</dbReference>
<dbReference type="GO" id="GO:0003735">
    <property type="term" value="F:structural constituent of ribosome"/>
    <property type="evidence" value="ECO:0007669"/>
    <property type="project" value="InterPro"/>
</dbReference>
<dbReference type="GO" id="GO:0000049">
    <property type="term" value="F:tRNA binding"/>
    <property type="evidence" value="ECO:0007669"/>
    <property type="project" value="UniProtKB-UniRule"/>
</dbReference>
<dbReference type="GO" id="GO:0006412">
    <property type="term" value="P:translation"/>
    <property type="evidence" value="ECO:0007669"/>
    <property type="project" value="UniProtKB-UniRule"/>
</dbReference>
<dbReference type="FunFam" id="1.10.8.50:FF:000001">
    <property type="entry name" value="30S ribosomal protein S13"/>
    <property type="match status" value="1"/>
</dbReference>
<dbReference type="FunFam" id="4.10.910.10:FF:000001">
    <property type="entry name" value="30S ribosomal protein S13"/>
    <property type="match status" value="1"/>
</dbReference>
<dbReference type="Gene3D" id="1.10.8.50">
    <property type="match status" value="1"/>
</dbReference>
<dbReference type="Gene3D" id="4.10.910.10">
    <property type="entry name" value="30s ribosomal protein s13, domain 2"/>
    <property type="match status" value="1"/>
</dbReference>
<dbReference type="HAMAP" id="MF_01315">
    <property type="entry name" value="Ribosomal_uS13"/>
    <property type="match status" value="1"/>
</dbReference>
<dbReference type="InterPro" id="IPR027437">
    <property type="entry name" value="Rbsml_uS13_C"/>
</dbReference>
<dbReference type="InterPro" id="IPR001892">
    <property type="entry name" value="Ribosomal_uS13"/>
</dbReference>
<dbReference type="InterPro" id="IPR010979">
    <property type="entry name" value="Ribosomal_uS13-like_H2TH"/>
</dbReference>
<dbReference type="InterPro" id="IPR019980">
    <property type="entry name" value="Ribosomal_uS13_bac-type"/>
</dbReference>
<dbReference type="InterPro" id="IPR018269">
    <property type="entry name" value="Ribosomal_uS13_CS"/>
</dbReference>
<dbReference type="NCBIfam" id="TIGR03631">
    <property type="entry name" value="uS13_bact"/>
    <property type="match status" value="1"/>
</dbReference>
<dbReference type="PANTHER" id="PTHR10871">
    <property type="entry name" value="30S RIBOSOMAL PROTEIN S13/40S RIBOSOMAL PROTEIN S18"/>
    <property type="match status" value="1"/>
</dbReference>
<dbReference type="PANTHER" id="PTHR10871:SF1">
    <property type="entry name" value="SMALL RIBOSOMAL SUBUNIT PROTEIN US13M"/>
    <property type="match status" value="1"/>
</dbReference>
<dbReference type="Pfam" id="PF00416">
    <property type="entry name" value="Ribosomal_S13"/>
    <property type="match status" value="1"/>
</dbReference>
<dbReference type="PIRSF" id="PIRSF002134">
    <property type="entry name" value="Ribosomal_S13"/>
    <property type="match status" value="1"/>
</dbReference>
<dbReference type="SUPFAM" id="SSF46946">
    <property type="entry name" value="S13-like H2TH domain"/>
    <property type="match status" value="1"/>
</dbReference>
<dbReference type="PROSITE" id="PS00646">
    <property type="entry name" value="RIBOSOMAL_S13_1"/>
    <property type="match status" value="1"/>
</dbReference>
<dbReference type="PROSITE" id="PS50159">
    <property type="entry name" value="RIBOSOMAL_S13_2"/>
    <property type="match status" value="1"/>
</dbReference>
<protein>
    <recommendedName>
        <fullName evidence="1">Small ribosomal subunit protein uS13</fullName>
    </recommendedName>
    <alternativeName>
        <fullName evidence="3">30S ribosomal protein S13</fullName>
    </alternativeName>
</protein>
<name>RS13_CHLTA</name>
<reference key="1">
    <citation type="journal article" date="2005" name="Infect. Immun.">
        <title>Comparative genomic analysis of Chlamydia trachomatis oculotropic and genitotropic strains.</title>
        <authorList>
            <person name="Carlson J.H."/>
            <person name="Porcella S.F."/>
            <person name="McClarty G."/>
            <person name="Caldwell H.D."/>
        </authorList>
    </citation>
    <scope>NUCLEOTIDE SEQUENCE [LARGE SCALE GENOMIC DNA]</scope>
    <source>
        <strain>ATCC VR-571B / DSM 19440 / HAR-13</strain>
    </source>
</reference>
<keyword id="KW-0687">Ribonucleoprotein</keyword>
<keyword id="KW-0689">Ribosomal protein</keyword>
<keyword id="KW-0694">RNA-binding</keyword>
<keyword id="KW-0699">rRNA-binding</keyword>
<keyword id="KW-0820">tRNA-binding</keyword>
<gene>
    <name evidence="1" type="primary">rpsM</name>
    <name type="ordered locus">CTA_0558</name>
</gene>
<accession>Q3KLI8</accession>
<sequence length="122" mass="13881">MPRIIGIDIPAKKKLKISLTYIYGIGPALSKEIIARLQLNPEARAAELTEEEVGRLNALLQSDYVVEGDLRRRVQSDIKRLITIHAYRGQRHRLSLPVRGQRTKTNSRTRKGKRKTVAGKKK</sequence>
<organism>
    <name type="scientific">Chlamydia trachomatis serovar A (strain ATCC VR-571B / DSM 19440 / HAR-13)</name>
    <dbReference type="NCBI Taxonomy" id="315277"/>
    <lineage>
        <taxon>Bacteria</taxon>
        <taxon>Pseudomonadati</taxon>
        <taxon>Chlamydiota</taxon>
        <taxon>Chlamydiia</taxon>
        <taxon>Chlamydiales</taxon>
        <taxon>Chlamydiaceae</taxon>
        <taxon>Chlamydia/Chlamydophila group</taxon>
        <taxon>Chlamydia</taxon>
    </lineage>
</organism>
<evidence type="ECO:0000255" key="1">
    <source>
        <dbReference type="HAMAP-Rule" id="MF_01315"/>
    </source>
</evidence>
<evidence type="ECO:0000256" key="2">
    <source>
        <dbReference type="SAM" id="MobiDB-lite"/>
    </source>
</evidence>
<evidence type="ECO:0000305" key="3"/>